<comment type="function">
    <text evidence="2">Catalyzes the transfer of endogenously produced octanoic acid from octanoyl-acyl-carrier-protein onto the lipoyl domains of lipoate-dependent enzymes. Lipoyl-ACP can also act as a substrate although octanoyl-ACP is likely to be the physiological substrate.</text>
</comment>
<comment type="catalytic activity">
    <reaction evidence="2">
        <text>octanoyl-[ACP] + L-lysyl-[protein] = N(6)-octanoyl-L-lysyl-[protein] + holo-[ACP] + H(+)</text>
        <dbReference type="Rhea" id="RHEA:17665"/>
        <dbReference type="Rhea" id="RHEA-COMP:9636"/>
        <dbReference type="Rhea" id="RHEA-COMP:9685"/>
        <dbReference type="Rhea" id="RHEA-COMP:9752"/>
        <dbReference type="Rhea" id="RHEA-COMP:9928"/>
        <dbReference type="ChEBI" id="CHEBI:15378"/>
        <dbReference type="ChEBI" id="CHEBI:29969"/>
        <dbReference type="ChEBI" id="CHEBI:64479"/>
        <dbReference type="ChEBI" id="CHEBI:78463"/>
        <dbReference type="ChEBI" id="CHEBI:78809"/>
        <dbReference type="EC" id="2.3.1.181"/>
    </reaction>
</comment>
<comment type="pathway">
    <text evidence="2">Protein modification; protein lipoylation via endogenous pathway; protein N(6)-(lipoyl)lysine from octanoyl-[acyl-carrier-protein]: step 1/2.</text>
</comment>
<comment type="subunit">
    <text evidence="1">Monomer.</text>
</comment>
<comment type="subcellular location">
    <subcellularLocation>
        <location evidence="2">Cytoplasm</location>
    </subcellularLocation>
</comment>
<comment type="miscellaneous">
    <text>In the reaction, the free carboxyl group of octanoic acid is attached via an amide linkage to the epsilon-amino group of a specific lysine residue of lipoyl domains of lipoate-dependent enzymes.</text>
</comment>
<comment type="similarity">
    <text evidence="2">Belongs to the LipB family.</text>
</comment>
<comment type="sequence caution" evidence="4">
    <conflict type="erroneous initiation">
        <sequence resource="EMBL-CDS" id="AAK46559"/>
    </conflict>
</comment>
<keyword id="KW-0012">Acyltransferase</keyword>
<keyword id="KW-0963">Cytoplasm</keyword>
<keyword id="KW-1185">Reference proteome</keyword>
<keyword id="KW-0808">Transferase</keyword>
<accession>P9WK82</accession>
<accession>L0T8Z0</accession>
<accession>Q10404</accession>
<organism>
    <name type="scientific">Mycobacterium tuberculosis (strain CDC 1551 / Oshkosh)</name>
    <dbReference type="NCBI Taxonomy" id="83331"/>
    <lineage>
        <taxon>Bacteria</taxon>
        <taxon>Bacillati</taxon>
        <taxon>Actinomycetota</taxon>
        <taxon>Actinomycetes</taxon>
        <taxon>Mycobacteriales</taxon>
        <taxon>Mycobacteriaceae</taxon>
        <taxon>Mycobacterium</taxon>
        <taxon>Mycobacterium tuberculosis complex</taxon>
    </lineage>
</organism>
<name>LIPB_MYCTO</name>
<proteinExistence type="inferred from homology"/>
<gene>
    <name evidence="2" type="primary">lipB</name>
    <name type="ordered locus">MT2274</name>
</gene>
<sequence length="230" mass="24211">MTGSIRSKLSAIDVRQLGTVDYRTAWQLQRELADARVAGGADTLLLLEHPAVYTAGRRTETHERPIDGTPVVDTDRGGKITWHGPGQLVGYPIIGLAEPLDVVNYVRRLEESLIQVCADLGLHAGRVDGRSGVWLPGRPARKVAAIGVRVSRATTLHGFALNCDCDLAAFTAIVPCGISDAAVTSLSAELGRTVTVDEVRATVAAAVCAALDGVLPVGDRVPSHAVPSPL</sequence>
<reference key="1">
    <citation type="journal article" date="2002" name="J. Bacteriol.">
        <title>Whole-genome comparison of Mycobacterium tuberculosis clinical and laboratory strains.</title>
        <authorList>
            <person name="Fleischmann R.D."/>
            <person name="Alland D."/>
            <person name="Eisen J.A."/>
            <person name="Carpenter L."/>
            <person name="White O."/>
            <person name="Peterson J.D."/>
            <person name="DeBoy R.T."/>
            <person name="Dodson R.J."/>
            <person name="Gwinn M.L."/>
            <person name="Haft D.H."/>
            <person name="Hickey E.K."/>
            <person name="Kolonay J.F."/>
            <person name="Nelson W.C."/>
            <person name="Umayam L.A."/>
            <person name="Ermolaeva M.D."/>
            <person name="Salzberg S.L."/>
            <person name="Delcher A."/>
            <person name="Utterback T.R."/>
            <person name="Weidman J.F."/>
            <person name="Khouri H.M."/>
            <person name="Gill J."/>
            <person name="Mikula A."/>
            <person name="Bishai W."/>
            <person name="Jacobs W.R. Jr."/>
            <person name="Venter J.C."/>
            <person name="Fraser C.M."/>
        </authorList>
    </citation>
    <scope>NUCLEOTIDE SEQUENCE [LARGE SCALE GENOMIC DNA]</scope>
    <source>
        <strain>CDC 1551 / Oshkosh</strain>
    </source>
</reference>
<dbReference type="EC" id="2.3.1.181" evidence="2"/>
<dbReference type="EMBL" id="AE000516">
    <property type="protein sequence ID" value="AAK46559.1"/>
    <property type="status" value="ALT_INIT"/>
    <property type="molecule type" value="Genomic_DNA"/>
</dbReference>
<dbReference type="PIR" id="B70787">
    <property type="entry name" value="B70787"/>
</dbReference>
<dbReference type="RefSeq" id="WP_003411458.1">
    <property type="nucleotide sequence ID" value="NZ_KK341227.1"/>
</dbReference>
<dbReference type="SMR" id="P9WK82"/>
<dbReference type="GeneID" id="45426193"/>
<dbReference type="KEGG" id="mtc:MT2274"/>
<dbReference type="PATRIC" id="fig|83331.31.peg.2448"/>
<dbReference type="HOGENOM" id="CLU_035168_2_1_11"/>
<dbReference type="UniPathway" id="UPA00538">
    <property type="reaction ID" value="UER00592"/>
</dbReference>
<dbReference type="Proteomes" id="UP000001020">
    <property type="component" value="Chromosome"/>
</dbReference>
<dbReference type="GO" id="GO:0005737">
    <property type="term" value="C:cytoplasm"/>
    <property type="evidence" value="ECO:0007669"/>
    <property type="project" value="UniProtKB-SubCell"/>
</dbReference>
<dbReference type="GO" id="GO:0033819">
    <property type="term" value="F:lipoyl(octanoyl) transferase activity"/>
    <property type="evidence" value="ECO:0007669"/>
    <property type="project" value="UniProtKB-EC"/>
</dbReference>
<dbReference type="GO" id="GO:0036211">
    <property type="term" value="P:protein modification process"/>
    <property type="evidence" value="ECO:0007669"/>
    <property type="project" value="InterPro"/>
</dbReference>
<dbReference type="CDD" id="cd16444">
    <property type="entry name" value="LipB"/>
    <property type="match status" value="1"/>
</dbReference>
<dbReference type="FunFam" id="3.30.930.10:FF:000035">
    <property type="entry name" value="Putative lipoyltransferase 2, mitochondrial"/>
    <property type="match status" value="1"/>
</dbReference>
<dbReference type="Gene3D" id="3.30.930.10">
    <property type="entry name" value="Bira Bifunctional Protein, Domain 2"/>
    <property type="match status" value="1"/>
</dbReference>
<dbReference type="HAMAP" id="MF_00013">
    <property type="entry name" value="LipB"/>
    <property type="match status" value="1"/>
</dbReference>
<dbReference type="InterPro" id="IPR045864">
    <property type="entry name" value="aa-tRNA-synth_II/BPL/LPL"/>
</dbReference>
<dbReference type="InterPro" id="IPR004143">
    <property type="entry name" value="BPL_LPL_catalytic"/>
</dbReference>
<dbReference type="InterPro" id="IPR000544">
    <property type="entry name" value="Octanoyltransferase"/>
</dbReference>
<dbReference type="InterPro" id="IPR020605">
    <property type="entry name" value="Octanoyltransferase_CS"/>
</dbReference>
<dbReference type="NCBIfam" id="TIGR00214">
    <property type="entry name" value="lipB"/>
    <property type="match status" value="1"/>
</dbReference>
<dbReference type="NCBIfam" id="NF010925">
    <property type="entry name" value="PRK14345.1"/>
    <property type="match status" value="1"/>
</dbReference>
<dbReference type="PANTHER" id="PTHR10993:SF7">
    <property type="entry name" value="LIPOYLTRANSFERASE 2, MITOCHONDRIAL-RELATED"/>
    <property type="match status" value="1"/>
</dbReference>
<dbReference type="PANTHER" id="PTHR10993">
    <property type="entry name" value="OCTANOYLTRANSFERASE"/>
    <property type="match status" value="1"/>
</dbReference>
<dbReference type="Pfam" id="PF21948">
    <property type="entry name" value="LplA-B_cat"/>
    <property type="match status" value="1"/>
</dbReference>
<dbReference type="PIRSF" id="PIRSF016262">
    <property type="entry name" value="LPLase"/>
    <property type="match status" value="1"/>
</dbReference>
<dbReference type="SUPFAM" id="SSF55681">
    <property type="entry name" value="Class II aaRS and biotin synthetases"/>
    <property type="match status" value="1"/>
</dbReference>
<dbReference type="PROSITE" id="PS51733">
    <property type="entry name" value="BPL_LPL_CATALYTIC"/>
    <property type="match status" value="1"/>
</dbReference>
<dbReference type="PROSITE" id="PS01313">
    <property type="entry name" value="LIPB"/>
    <property type="match status" value="1"/>
</dbReference>
<feature type="chain" id="PRO_0000427699" description="Octanoyltransferase">
    <location>
        <begin position="1"/>
        <end position="230"/>
    </location>
</feature>
<feature type="domain" description="BPL/LPL catalytic" evidence="3">
    <location>
        <begin position="38"/>
        <end position="215"/>
    </location>
</feature>
<feature type="active site" description="Acyl-thioester intermediate" evidence="2">
    <location>
        <position position="176"/>
    </location>
</feature>
<feature type="binding site" evidence="2">
    <location>
        <begin position="76"/>
        <end position="83"/>
    </location>
    <ligand>
        <name>substrate</name>
    </ligand>
</feature>
<feature type="binding site" evidence="2">
    <location>
        <begin position="145"/>
        <end position="147"/>
    </location>
    <ligand>
        <name>substrate</name>
    </ligand>
</feature>
<feature type="binding site" evidence="2">
    <location>
        <begin position="158"/>
        <end position="160"/>
    </location>
    <ligand>
        <name>substrate</name>
    </ligand>
</feature>
<feature type="site" description="Lowers pKa of active site Cys" evidence="2">
    <location>
        <position position="142"/>
    </location>
</feature>
<evidence type="ECO:0000250" key="1"/>
<evidence type="ECO:0000255" key="2">
    <source>
        <dbReference type="HAMAP-Rule" id="MF_00013"/>
    </source>
</evidence>
<evidence type="ECO:0000255" key="3">
    <source>
        <dbReference type="PROSITE-ProRule" id="PRU01067"/>
    </source>
</evidence>
<evidence type="ECO:0000305" key="4"/>
<protein>
    <recommendedName>
        <fullName evidence="2">Octanoyltransferase</fullName>
        <ecNumber evidence="2">2.3.1.181</ecNumber>
    </recommendedName>
    <alternativeName>
        <fullName evidence="2">Lipoate-protein ligase B</fullName>
    </alternativeName>
    <alternativeName>
        <fullName evidence="2">Lipoyl/octanoyl transferase</fullName>
    </alternativeName>
    <alternativeName>
        <fullName evidence="2">Octanoyl-[acyl-carrier-protein]-protein N-octanoyltransferase</fullName>
    </alternativeName>
</protein>